<dbReference type="EC" id="2.7.2.1" evidence="1"/>
<dbReference type="EMBL" id="AE002098">
    <property type="protein sequence ID" value="AAF41874.1"/>
    <property type="molecule type" value="Genomic_DNA"/>
</dbReference>
<dbReference type="PIR" id="E81074">
    <property type="entry name" value="E81074"/>
</dbReference>
<dbReference type="RefSeq" id="NP_274526.1">
    <property type="nucleotide sequence ID" value="NC_003112.2"/>
</dbReference>
<dbReference type="RefSeq" id="WP_002222237.1">
    <property type="nucleotide sequence ID" value="NC_003112.2"/>
</dbReference>
<dbReference type="SMR" id="Q9JYM1"/>
<dbReference type="FunCoup" id="Q9JYM1">
    <property type="interactions" value="337"/>
</dbReference>
<dbReference type="STRING" id="122586.NMB1518"/>
<dbReference type="PaxDb" id="122586-NMB1518"/>
<dbReference type="KEGG" id="nme:NMB1518"/>
<dbReference type="PATRIC" id="fig|122586.8.peg.1924"/>
<dbReference type="HOGENOM" id="CLU_020352_0_1_4"/>
<dbReference type="InParanoid" id="Q9JYM1"/>
<dbReference type="OrthoDB" id="9802453at2"/>
<dbReference type="UniPathway" id="UPA00340">
    <property type="reaction ID" value="UER00458"/>
</dbReference>
<dbReference type="Proteomes" id="UP000000425">
    <property type="component" value="Chromosome"/>
</dbReference>
<dbReference type="GO" id="GO:0005829">
    <property type="term" value="C:cytosol"/>
    <property type="evidence" value="ECO:0000318"/>
    <property type="project" value="GO_Central"/>
</dbReference>
<dbReference type="GO" id="GO:0008776">
    <property type="term" value="F:acetate kinase activity"/>
    <property type="evidence" value="ECO:0000318"/>
    <property type="project" value="GO_Central"/>
</dbReference>
<dbReference type="GO" id="GO:0005524">
    <property type="term" value="F:ATP binding"/>
    <property type="evidence" value="ECO:0007669"/>
    <property type="project" value="UniProtKB-KW"/>
</dbReference>
<dbReference type="GO" id="GO:0000287">
    <property type="term" value="F:magnesium ion binding"/>
    <property type="evidence" value="ECO:0007669"/>
    <property type="project" value="UniProtKB-UniRule"/>
</dbReference>
<dbReference type="GO" id="GO:0006083">
    <property type="term" value="P:acetate metabolic process"/>
    <property type="evidence" value="ECO:0000318"/>
    <property type="project" value="GO_Central"/>
</dbReference>
<dbReference type="GO" id="GO:0006085">
    <property type="term" value="P:acetyl-CoA biosynthetic process"/>
    <property type="evidence" value="ECO:0007669"/>
    <property type="project" value="UniProtKB-UniRule"/>
</dbReference>
<dbReference type="CDD" id="cd24010">
    <property type="entry name" value="ASKHA_NBD_AcK_PK"/>
    <property type="match status" value="1"/>
</dbReference>
<dbReference type="Gene3D" id="3.30.420.40">
    <property type="match status" value="2"/>
</dbReference>
<dbReference type="HAMAP" id="MF_00020">
    <property type="entry name" value="Acetate_kinase"/>
    <property type="match status" value="1"/>
</dbReference>
<dbReference type="InterPro" id="IPR004372">
    <property type="entry name" value="Ac/propionate_kinase"/>
</dbReference>
<dbReference type="InterPro" id="IPR000890">
    <property type="entry name" value="Aliphatic_acid_kin_short-chain"/>
</dbReference>
<dbReference type="InterPro" id="IPR023865">
    <property type="entry name" value="Aliphatic_acid_kinase_CS"/>
</dbReference>
<dbReference type="InterPro" id="IPR043129">
    <property type="entry name" value="ATPase_NBD"/>
</dbReference>
<dbReference type="NCBIfam" id="TIGR00016">
    <property type="entry name" value="ackA"/>
    <property type="match status" value="1"/>
</dbReference>
<dbReference type="PANTHER" id="PTHR21060">
    <property type="entry name" value="ACETATE KINASE"/>
    <property type="match status" value="1"/>
</dbReference>
<dbReference type="PANTHER" id="PTHR21060:SF21">
    <property type="entry name" value="ACETATE KINASE"/>
    <property type="match status" value="1"/>
</dbReference>
<dbReference type="Pfam" id="PF00871">
    <property type="entry name" value="Acetate_kinase"/>
    <property type="match status" value="1"/>
</dbReference>
<dbReference type="PIRSF" id="PIRSF000722">
    <property type="entry name" value="Acetate_prop_kin"/>
    <property type="match status" value="1"/>
</dbReference>
<dbReference type="PRINTS" id="PR00471">
    <property type="entry name" value="ACETATEKNASE"/>
</dbReference>
<dbReference type="SUPFAM" id="SSF53067">
    <property type="entry name" value="Actin-like ATPase domain"/>
    <property type="match status" value="2"/>
</dbReference>
<dbReference type="PROSITE" id="PS01075">
    <property type="entry name" value="ACETATE_KINASE_1"/>
    <property type="match status" value="1"/>
</dbReference>
<dbReference type="PROSITE" id="PS01076">
    <property type="entry name" value="ACETATE_KINASE_2"/>
    <property type="match status" value="1"/>
</dbReference>
<sequence length="398" mass="42410">MSQKLILVLNCGSSSLKGAVLDNGSGEVLLSCLAEKLNLPDAYITFKVNGEKHKVDLSAHPDHTGAVEALMEELKAHGLDSRIGAIGHRVVSGGELYSESILVDDEVIAGIEKCIPLAPLHNPAHLLGLRAAQSIFKGLPNVVVFDTSFHQTMPEVAYKYAVPQELYEKYGLRRYGAHGTSYRFVADETARFLGKDKKDLRMVIAHLGNGASITAVANGESRDTSMGLTPLEGLVMGTRSGDIDPSVFGFLAENANMTIAQITEMLNKKSGLLGISGLSNDCRTIEEEAAKGHKGAKLALDMFIYRLAKYIGSMAVAAGGLDALVFTGGIGENSDIIRERVIGYLGFLGLNIDQEANLKARFGNAGVITTADSKAVAVVIPTNEELMIAHDTARLSGL</sequence>
<evidence type="ECO:0000255" key="1">
    <source>
        <dbReference type="HAMAP-Rule" id="MF_00020"/>
    </source>
</evidence>
<protein>
    <recommendedName>
        <fullName evidence="1">Acetate kinase 1</fullName>
        <ecNumber evidence="1">2.7.2.1</ecNumber>
    </recommendedName>
    <alternativeName>
        <fullName evidence="1">Acetokinase 1</fullName>
    </alternativeName>
</protein>
<comment type="function">
    <text evidence="1">Catalyzes the formation of acetyl phosphate from acetate and ATP. Can also catalyze the reverse reaction.</text>
</comment>
<comment type="catalytic activity">
    <reaction evidence="1">
        <text>acetate + ATP = acetyl phosphate + ADP</text>
        <dbReference type="Rhea" id="RHEA:11352"/>
        <dbReference type="ChEBI" id="CHEBI:22191"/>
        <dbReference type="ChEBI" id="CHEBI:30089"/>
        <dbReference type="ChEBI" id="CHEBI:30616"/>
        <dbReference type="ChEBI" id="CHEBI:456216"/>
        <dbReference type="EC" id="2.7.2.1"/>
    </reaction>
</comment>
<comment type="cofactor">
    <cofactor evidence="1">
        <name>Mg(2+)</name>
        <dbReference type="ChEBI" id="CHEBI:18420"/>
    </cofactor>
    <cofactor evidence="1">
        <name>Mn(2+)</name>
        <dbReference type="ChEBI" id="CHEBI:29035"/>
    </cofactor>
    <text evidence="1">Mg(2+). Can also accept Mn(2+).</text>
</comment>
<comment type="pathway">
    <text evidence="1">Metabolic intermediate biosynthesis; acetyl-CoA biosynthesis; acetyl-CoA from acetate: step 1/2.</text>
</comment>
<comment type="subunit">
    <text evidence="1">Homodimer.</text>
</comment>
<comment type="subcellular location">
    <subcellularLocation>
        <location evidence="1">Cytoplasm</location>
    </subcellularLocation>
</comment>
<comment type="similarity">
    <text evidence="1">Belongs to the acetokinase family.</text>
</comment>
<accession>Q9JYM1</accession>
<proteinExistence type="inferred from homology"/>
<name>ACKA1_NEIMB</name>
<organism>
    <name type="scientific">Neisseria meningitidis serogroup B (strain ATCC BAA-335 / MC58)</name>
    <dbReference type="NCBI Taxonomy" id="122586"/>
    <lineage>
        <taxon>Bacteria</taxon>
        <taxon>Pseudomonadati</taxon>
        <taxon>Pseudomonadota</taxon>
        <taxon>Betaproteobacteria</taxon>
        <taxon>Neisseriales</taxon>
        <taxon>Neisseriaceae</taxon>
        <taxon>Neisseria</taxon>
    </lineage>
</organism>
<reference key="1">
    <citation type="journal article" date="2000" name="Science">
        <title>Complete genome sequence of Neisseria meningitidis serogroup B strain MC58.</title>
        <authorList>
            <person name="Tettelin H."/>
            <person name="Saunders N.J."/>
            <person name="Heidelberg J.F."/>
            <person name="Jeffries A.C."/>
            <person name="Nelson K.E."/>
            <person name="Eisen J.A."/>
            <person name="Ketchum K.A."/>
            <person name="Hood D.W."/>
            <person name="Peden J.F."/>
            <person name="Dodson R.J."/>
            <person name="Nelson W.C."/>
            <person name="Gwinn M.L."/>
            <person name="DeBoy R.T."/>
            <person name="Peterson J.D."/>
            <person name="Hickey E.K."/>
            <person name="Haft D.H."/>
            <person name="Salzberg S.L."/>
            <person name="White O."/>
            <person name="Fleischmann R.D."/>
            <person name="Dougherty B.A."/>
            <person name="Mason T.M."/>
            <person name="Ciecko A."/>
            <person name="Parksey D.S."/>
            <person name="Blair E."/>
            <person name="Cittone H."/>
            <person name="Clark E.B."/>
            <person name="Cotton M.D."/>
            <person name="Utterback T.R."/>
            <person name="Khouri H.M."/>
            <person name="Qin H."/>
            <person name="Vamathevan J.J."/>
            <person name="Gill J."/>
            <person name="Scarlato V."/>
            <person name="Masignani V."/>
            <person name="Pizza M."/>
            <person name="Grandi G."/>
            <person name="Sun L."/>
            <person name="Smith H.O."/>
            <person name="Fraser C.M."/>
            <person name="Moxon E.R."/>
            <person name="Rappuoli R."/>
            <person name="Venter J.C."/>
        </authorList>
    </citation>
    <scope>NUCLEOTIDE SEQUENCE [LARGE SCALE GENOMIC DNA]</scope>
    <source>
        <strain>ATCC BAA-335 / MC58</strain>
    </source>
</reference>
<feature type="chain" id="PRO_0000107592" description="Acetate kinase 1">
    <location>
        <begin position="1"/>
        <end position="398"/>
    </location>
</feature>
<feature type="active site" description="Proton donor/acceptor" evidence="1">
    <location>
        <position position="146"/>
    </location>
</feature>
<feature type="binding site" evidence="1">
    <location>
        <position position="10"/>
    </location>
    <ligand>
        <name>Mg(2+)</name>
        <dbReference type="ChEBI" id="CHEBI:18420"/>
    </ligand>
</feature>
<feature type="binding site" evidence="1">
    <location>
        <position position="17"/>
    </location>
    <ligand>
        <name>ATP</name>
        <dbReference type="ChEBI" id="CHEBI:30616"/>
    </ligand>
</feature>
<feature type="binding site" evidence="1">
    <location>
        <position position="89"/>
    </location>
    <ligand>
        <name>substrate</name>
    </ligand>
</feature>
<feature type="binding site" evidence="1">
    <location>
        <begin position="206"/>
        <end position="210"/>
    </location>
    <ligand>
        <name>ATP</name>
        <dbReference type="ChEBI" id="CHEBI:30616"/>
    </ligand>
</feature>
<feature type="binding site" evidence="1">
    <location>
        <begin position="281"/>
        <end position="283"/>
    </location>
    <ligand>
        <name>ATP</name>
        <dbReference type="ChEBI" id="CHEBI:30616"/>
    </ligand>
</feature>
<feature type="binding site" evidence="1">
    <location>
        <begin position="329"/>
        <end position="333"/>
    </location>
    <ligand>
        <name>ATP</name>
        <dbReference type="ChEBI" id="CHEBI:30616"/>
    </ligand>
</feature>
<feature type="binding site" evidence="1">
    <location>
        <position position="384"/>
    </location>
    <ligand>
        <name>Mg(2+)</name>
        <dbReference type="ChEBI" id="CHEBI:18420"/>
    </ligand>
</feature>
<feature type="site" description="Transition state stabilizer" evidence="1">
    <location>
        <position position="178"/>
    </location>
</feature>
<feature type="site" description="Transition state stabilizer" evidence="1">
    <location>
        <position position="239"/>
    </location>
</feature>
<keyword id="KW-0067">ATP-binding</keyword>
<keyword id="KW-0963">Cytoplasm</keyword>
<keyword id="KW-0418">Kinase</keyword>
<keyword id="KW-0460">Magnesium</keyword>
<keyword id="KW-0479">Metal-binding</keyword>
<keyword id="KW-0547">Nucleotide-binding</keyword>
<keyword id="KW-1185">Reference proteome</keyword>
<keyword id="KW-0808">Transferase</keyword>
<gene>
    <name evidence="1" type="primary">ackA1</name>
    <name type="ordered locus">NMB1518</name>
</gene>